<sequence>FERGWDISGWSSYYSCTYFHVSYLADGKRGRQTYTRQQTLELEKEFHFSRYVTRRRRFEIAQSLGLSERQIKIWFQNRRMKWKREHGSNCTMTNQQDQMPSMADFIGS</sequence>
<organism>
    <name type="scientific">Tripneustes gratilla</name>
    <name type="common">Hawaian sea urchin</name>
    <name type="synonym">Echinus gratilla</name>
    <dbReference type="NCBI Taxonomy" id="7673"/>
    <lineage>
        <taxon>Eukaryota</taxon>
        <taxon>Metazoa</taxon>
        <taxon>Echinodermata</taxon>
        <taxon>Eleutherozoa</taxon>
        <taxon>Echinozoa</taxon>
        <taxon>Echinoidea</taxon>
        <taxon>Euechinoidea</taxon>
        <taxon>Echinacea</taxon>
        <taxon>Temnopleuroida</taxon>
        <taxon>Toxopneustidae</taxon>
        <taxon>Tripneustes</taxon>
    </lineage>
</organism>
<comment type="subcellular location">
    <subcellularLocation>
        <location evidence="2">Nucleus</location>
    </subcellularLocation>
</comment>
<comment type="similarity">
    <text evidence="2">Belongs to the Antp homeobox family.</text>
</comment>
<name>HMB3_TRIGR</name>
<keyword id="KW-0217">Developmental protein</keyword>
<keyword id="KW-0238">DNA-binding</keyword>
<keyword id="KW-0371">Homeobox</keyword>
<keyword id="KW-0539">Nucleus</keyword>
<accession>P10178</accession>
<dbReference type="EMBL" id="X13146">
    <property type="protein sequence ID" value="CAA31544.1"/>
    <property type="molecule type" value="Genomic_DNA"/>
</dbReference>
<dbReference type="PIR" id="S05258">
    <property type="entry name" value="S05258"/>
</dbReference>
<dbReference type="SMR" id="P10178"/>
<dbReference type="GO" id="GO:0005634">
    <property type="term" value="C:nucleus"/>
    <property type="evidence" value="ECO:0007669"/>
    <property type="project" value="UniProtKB-SubCell"/>
</dbReference>
<dbReference type="GO" id="GO:0000981">
    <property type="term" value="F:DNA-binding transcription factor activity, RNA polymerase II-specific"/>
    <property type="evidence" value="ECO:0007669"/>
    <property type="project" value="InterPro"/>
</dbReference>
<dbReference type="GO" id="GO:0000978">
    <property type="term" value="F:RNA polymerase II cis-regulatory region sequence-specific DNA binding"/>
    <property type="evidence" value="ECO:0007669"/>
    <property type="project" value="TreeGrafter"/>
</dbReference>
<dbReference type="GO" id="GO:0009952">
    <property type="term" value="P:anterior/posterior pattern specification"/>
    <property type="evidence" value="ECO:0007669"/>
    <property type="project" value="TreeGrafter"/>
</dbReference>
<dbReference type="CDD" id="cd00086">
    <property type="entry name" value="homeodomain"/>
    <property type="match status" value="1"/>
</dbReference>
<dbReference type="Gene3D" id="1.10.10.60">
    <property type="entry name" value="Homeodomain-like"/>
    <property type="match status" value="1"/>
</dbReference>
<dbReference type="InterPro" id="IPR050296">
    <property type="entry name" value="Antp_homeobox"/>
</dbReference>
<dbReference type="InterPro" id="IPR001356">
    <property type="entry name" value="HD"/>
</dbReference>
<dbReference type="InterPro" id="IPR020479">
    <property type="entry name" value="HD_metazoa"/>
</dbReference>
<dbReference type="InterPro" id="IPR017970">
    <property type="entry name" value="Homeobox_CS"/>
</dbReference>
<dbReference type="InterPro" id="IPR009057">
    <property type="entry name" value="Homeodomain-like_sf"/>
</dbReference>
<dbReference type="InterPro" id="IPR000047">
    <property type="entry name" value="HTH_motif"/>
</dbReference>
<dbReference type="PANTHER" id="PTHR45659:SF4">
    <property type="entry name" value="HOMEOBOX PROTEIN ABDOMINAL-A"/>
    <property type="match status" value="1"/>
</dbReference>
<dbReference type="PANTHER" id="PTHR45659">
    <property type="entry name" value="HOMEOBOX PROTEIN HOX"/>
    <property type="match status" value="1"/>
</dbReference>
<dbReference type="Pfam" id="PF00046">
    <property type="entry name" value="Homeodomain"/>
    <property type="match status" value="1"/>
</dbReference>
<dbReference type="PRINTS" id="PR00024">
    <property type="entry name" value="HOMEOBOX"/>
</dbReference>
<dbReference type="PRINTS" id="PR00031">
    <property type="entry name" value="HTHREPRESSR"/>
</dbReference>
<dbReference type="SMART" id="SM00389">
    <property type="entry name" value="HOX"/>
    <property type="match status" value="1"/>
</dbReference>
<dbReference type="SUPFAM" id="SSF46689">
    <property type="entry name" value="Homeodomain-like"/>
    <property type="match status" value="1"/>
</dbReference>
<dbReference type="PROSITE" id="PS00027">
    <property type="entry name" value="HOMEOBOX_1"/>
    <property type="match status" value="1"/>
</dbReference>
<dbReference type="PROSITE" id="PS50071">
    <property type="entry name" value="HOMEOBOX_2"/>
    <property type="match status" value="1"/>
</dbReference>
<evidence type="ECO:0000255" key="1">
    <source>
        <dbReference type="PROSITE-ProRule" id="PRU00108"/>
    </source>
</evidence>
<evidence type="ECO:0000305" key="2"/>
<feature type="chain" id="PRO_0000049012" description="Homeobox protein HB3">
    <location>
        <begin position="1" status="less than"/>
        <end position="108"/>
    </location>
</feature>
<feature type="DNA-binding region" description="Homeobox" evidence="1">
    <location>
        <begin position="27"/>
        <end position="86"/>
    </location>
</feature>
<feature type="non-terminal residue">
    <location>
        <position position="1"/>
    </location>
</feature>
<proteinExistence type="inferred from homology"/>
<protein>
    <recommendedName>
        <fullName>Homeobox protein HB3</fullName>
    </recommendedName>
</protein>
<reference key="1">
    <citation type="journal article" date="1988" name="Nucleic Acids Res.">
        <title>Stage- and tissue-specific expression of two homeo box genes in sea urchin embryos and adults.</title>
        <authorList>
            <person name="Dolecki G.J."/>
            <person name="Wang G."/>
            <person name="Humphreys T."/>
        </authorList>
    </citation>
    <scope>NUCLEOTIDE SEQUENCE [GENOMIC DNA]</scope>
    <source>
        <tissue>Sperm</tissue>
    </source>
</reference>